<name>RLMF_PSE14</name>
<evidence type="ECO:0000255" key="1">
    <source>
        <dbReference type="HAMAP-Rule" id="MF_01848"/>
    </source>
</evidence>
<evidence type="ECO:0000256" key="2">
    <source>
        <dbReference type="SAM" id="MobiDB-lite"/>
    </source>
</evidence>
<evidence type="ECO:0000305" key="3"/>
<accession>Q48MF3</accession>
<comment type="function">
    <text evidence="1">Specifically methylates the adenine in position 1618 of 23S rRNA.</text>
</comment>
<comment type="catalytic activity">
    <reaction evidence="1">
        <text>adenosine(1618) in 23S rRNA + S-adenosyl-L-methionine = N(6)-methyladenosine(1618) in 23S rRNA + S-adenosyl-L-homocysteine + H(+)</text>
        <dbReference type="Rhea" id="RHEA:16497"/>
        <dbReference type="Rhea" id="RHEA-COMP:10229"/>
        <dbReference type="Rhea" id="RHEA-COMP:10231"/>
        <dbReference type="ChEBI" id="CHEBI:15378"/>
        <dbReference type="ChEBI" id="CHEBI:57856"/>
        <dbReference type="ChEBI" id="CHEBI:59789"/>
        <dbReference type="ChEBI" id="CHEBI:74411"/>
        <dbReference type="ChEBI" id="CHEBI:74449"/>
        <dbReference type="EC" id="2.1.1.181"/>
    </reaction>
</comment>
<comment type="subcellular location">
    <subcellularLocation>
        <location evidence="1">Cytoplasm</location>
    </subcellularLocation>
</comment>
<comment type="similarity">
    <text evidence="1">Belongs to the methyltransferase superfamily. METTL16/RlmF family.</text>
</comment>
<comment type="sequence caution" evidence="3">
    <conflict type="erroneous initiation">
        <sequence resource="EMBL-CDS" id="AAZ34734"/>
    </conflict>
</comment>
<gene>
    <name evidence="1" type="primary">rlmF</name>
    <name type="ordered locus">PSPPH_1152</name>
</gene>
<sequence length="328" mass="36246">MTDTRKPPRKKPQRPAKPAAPREKATLHPRNRHQGHYDFAKLIKSSPELAAFVILNPYGKESIDFADPQAVRVFNRALLKAFYGIAHWDIPADYLCPPIPGRADYLHFLADLLAEDNEGVIPRGASIKALDIGTGANCIYPLLGHSDYGWQFVGSDIDSTAIAAATTIIKANGLSKAISVRQQDNRKQILLGLLDSSERFHVSLCNPPFHASLDEAQRGSQRKWRALGKADPKRKLPVLNFGGQSQELWCEGGEIGFVTRLIQESATLPSQVVWFSTLVSKASNLPPIQNALKKAGALEVKVIEMGQGQKQSRFVAWTFLDKAQRTPH</sequence>
<protein>
    <recommendedName>
        <fullName evidence="1">Ribosomal RNA large subunit methyltransferase F</fullName>
        <ecNumber evidence="1">2.1.1.181</ecNumber>
    </recommendedName>
    <alternativeName>
        <fullName evidence="1">23S rRNA mA1618 methyltransferase</fullName>
    </alternativeName>
    <alternativeName>
        <fullName evidence="1">rRNA adenine N-6-methyltransferase</fullName>
    </alternativeName>
</protein>
<proteinExistence type="inferred from homology"/>
<dbReference type="EC" id="2.1.1.181" evidence="1"/>
<dbReference type="EMBL" id="CP000058">
    <property type="protein sequence ID" value="AAZ34734.1"/>
    <property type="status" value="ALT_INIT"/>
    <property type="molecule type" value="Genomic_DNA"/>
</dbReference>
<dbReference type="RefSeq" id="WP_011167923.1">
    <property type="nucleotide sequence ID" value="NC_005773.3"/>
</dbReference>
<dbReference type="SMR" id="Q48MF3"/>
<dbReference type="KEGG" id="psp:PSPPH_1152"/>
<dbReference type="eggNOG" id="COG3129">
    <property type="taxonomic scope" value="Bacteria"/>
</dbReference>
<dbReference type="HOGENOM" id="CLU_027534_3_0_6"/>
<dbReference type="Proteomes" id="UP000000551">
    <property type="component" value="Chromosome"/>
</dbReference>
<dbReference type="GO" id="GO:0005737">
    <property type="term" value="C:cytoplasm"/>
    <property type="evidence" value="ECO:0007669"/>
    <property type="project" value="UniProtKB-SubCell"/>
</dbReference>
<dbReference type="GO" id="GO:0052907">
    <property type="term" value="F:23S rRNA (adenine(1618)-N(6))-methyltransferase activity"/>
    <property type="evidence" value="ECO:0007669"/>
    <property type="project" value="UniProtKB-EC"/>
</dbReference>
<dbReference type="GO" id="GO:0070475">
    <property type="term" value="P:rRNA base methylation"/>
    <property type="evidence" value="ECO:0007669"/>
    <property type="project" value="TreeGrafter"/>
</dbReference>
<dbReference type="CDD" id="cd02440">
    <property type="entry name" value="AdoMet_MTases"/>
    <property type="match status" value="1"/>
</dbReference>
<dbReference type="Gene3D" id="3.40.50.150">
    <property type="entry name" value="Vaccinia Virus protein VP39"/>
    <property type="match status" value="1"/>
</dbReference>
<dbReference type="HAMAP" id="MF_01848">
    <property type="entry name" value="23SrRNA_methyltr_F"/>
    <property type="match status" value="1"/>
</dbReference>
<dbReference type="InterPro" id="IPR010286">
    <property type="entry name" value="METTL16/RlmF"/>
</dbReference>
<dbReference type="InterPro" id="IPR016909">
    <property type="entry name" value="rRNA_lsu_MeTfrase_F"/>
</dbReference>
<dbReference type="InterPro" id="IPR029063">
    <property type="entry name" value="SAM-dependent_MTases_sf"/>
</dbReference>
<dbReference type="NCBIfam" id="NF008725">
    <property type="entry name" value="PRK11727.1"/>
    <property type="match status" value="1"/>
</dbReference>
<dbReference type="PANTHER" id="PTHR13393:SF0">
    <property type="entry name" value="RNA N6-ADENOSINE-METHYLTRANSFERASE METTL16"/>
    <property type="match status" value="1"/>
</dbReference>
<dbReference type="PANTHER" id="PTHR13393">
    <property type="entry name" value="SAM-DEPENDENT METHYLTRANSFERASE"/>
    <property type="match status" value="1"/>
</dbReference>
<dbReference type="Pfam" id="PF05971">
    <property type="entry name" value="Methyltransf_10"/>
    <property type="match status" value="1"/>
</dbReference>
<dbReference type="PIRSF" id="PIRSF029038">
    <property type="entry name" value="Mtase_YbiN_prd"/>
    <property type="match status" value="1"/>
</dbReference>
<dbReference type="SUPFAM" id="SSF53335">
    <property type="entry name" value="S-adenosyl-L-methionine-dependent methyltransferases"/>
    <property type="match status" value="1"/>
</dbReference>
<keyword id="KW-0963">Cytoplasm</keyword>
<keyword id="KW-0489">Methyltransferase</keyword>
<keyword id="KW-0698">rRNA processing</keyword>
<keyword id="KW-0949">S-adenosyl-L-methionine</keyword>
<keyword id="KW-0808">Transferase</keyword>
<reference key="1">
    <citation type="journal article" date="2005" name="J. Bacteriol.">
        <title>Whole-genome sequence analysis of Pseudomonas syringae pv. phaseolicola 1448A reveals divergence among pathovars in genes involved in virulence and transposition.</title>
        <authorList>
            <person name="Joardar V."/>
            <person name="Lindeberg M."/>
            <person name="Jackson R.W."/>
            <person name="Selengut J."/>
            <person name="Dodson R."/>
            <person name="Brinkac L.M."/>
            <person name="Daugherty S.C."/>
            <person name="DeBoy R.T."/>
            <person name="Durkin A.S."/>
            <person name="Gwinn Giglio M."/>
            <person name="Madupu R."/>
            <person name="Nelson W.C."/>
            <person name="Rosovitz M.J."/>
            <person name="Sullivan S.A."/>
            <person name="Crabtree J."/>
            <person name="Creasy T."/>
            <person name="Davidsen T.M."/>
            <person name="Haft D.H."/>
            <person name="Zafar N."/>
            <person name="Zhou L."/>
            <person name="Halpin R."/>
            <person name="Holley T."/>
            <person name="Khouri H.M."/>
            <person name="Feldblyum T.V."/>
            <person name="White O."/>
            <person name="Fraser C.M."/>
            <person name="Chatterjee A.K."/>
            <person name="Cartinhour S."/>
            <person name="Schneider D."/>
            <person name="Mansfield J.W."/>
            <person name="Collmer A."/>
            <person name="Buell R."/>
        </authorList>
    </citation>
    <scope>NUCLEOTIDE SEQUENCE [LARGE SCALE GENOMIC DNA]</scope>
    <source>
        <strain>1448A / Race 6</strain>
    </source>
</reference>
<organism>
    <name type="scientific">Pseudomonas savastanoi pv. phaseolicola (strain 1448A / Race 6)</name>
    <name type="common">Pseudomonas syringae pv. phaseolicola (strain 1448A / Race 6)</name>
    <dbReference type="NCBI Taxonomy" id="264730"/>
    <lineage>
        <taxon>Bacteria</taxon>
        <taxon>Pseudomonadati</taxon>
        <taxon>Pseudomonadota</taxon>
        <taxon>Gammaproteobacteria</taxon>
        <taxon>Pseudomonadales</taxon>
        <taxon>Pseudomonadaceae</taxon>
        <taxon>Pseudomonas</taxon>
    </lineage>
</organism>
<feature type="chain" id="PRO_0000349937" description="Ribosomal RNA large subunit methyltransferase F">
    <location>
        <begin position="1"/>
        <end position="328"/>
    </location>
</feature>
<feature type="region of interest" description="Disordered" evidence="2">
    <location>
        <begin position="1"/>
        <end position="31"/>
    </location>
</feature>